<dbReference type="PIR" id="A02105">
    <property type="entry name" value="HVRBP3"/>
</dbReference>
<dbReference type="SMR" id="P01829"/>
<dbReference type="FunCoup" id="P01829">
    <property type="interactions" value="255"/>
</dbReference>
<dbReference type="STRING" id="9986.ENSOCUP00000009284"/>
<dbReference type="InParanoid" id="P01829"/>
<dbReference type="Proteomes" id="UP000001811">
    <property type="component" value="Unplaced"/>
</dbReference>
<dbReference type="GO" id="GO:0005576">
    <property type="term" value="C:extracellular region"/>
    <property type="evidence" value="ECO:0007669"/>
    <property type="project" value="UniProtKB-ARBA"/>
</dbReference>
<dbReference type="GO" id="GO:0019814">
    <property type="term" value="C:immunoglobulin complex"/>
    <property type="evidence" value="ECO:0007669"/>
    <property type="project" value="UniProtKB-KW"/>
</dbReference>
<dbReference type="GO" id="GO:0002250">
    <property type="term" value="P:adaptive immune response"/>
    <property type="evidence" value="ECO:0007669"/>
    <property type="project" value="UniProtKB-KW"/>
</dbReference>
<dbReference type="FunFam" id="2.60.40.10:FF:001878">
    <property type="entry name" value="Immunoglobulin heavy variable 1-4"/>
    <property type="match status" value="1"/>
</dbReference>
<dbReference type="Gene3D" id="2.60.40.10">
    <property type="entry name" value="Immunoglobulins"/>
    <property type="match status" value="1"/>
</dbReference>
<dbReference type="InterPro" id="IPR007110">
    <property type="entry name" value="Ig-like_dom"/>
</dbReference>
<dbReference type="InterPro" id="IPR036179">
    <property type="entry name" value="Ig-like_dom_sf"/>
</dbReference>
<dbReference type="InterPro" id="IPR013783">
    <property type="entry name" value="Ig-like_fold"/>
</dbReference>
<dbReference type="InterPro" id="IPR003599">
    <property type="entry name" value="Ig_sub"/>
</dbReference>
<dbReference type="InterPro" id="IPR013106">
    <property type="entry name" value="Ig_V-set"/>
</dbReference>
<dbReference type="InterPro" id="IPR050199">
    <property type="entry name" value="IgHV"/>
</dbReference>
<dbReference type="PANTHER" id="PTHR23266">
    <property type="entry name" value="IMMUNOGLOBULIN HEAVY CHAIN"/>
    <property type="match status" value="1"/>
</dbReference>
<dbReference type="Pfam" id="PF07686">
    <property type="entry name" value="V-set"/>
    <property type="match status" value="1"/>
</dbReference>
<dbReference type="SMART" id="SM00409">
    <property type="entry name" value="IG"/>
    <property type="match status" value="1"/>
</dbReference>
<dbReference type="SMART" id="SM00406">
    <property type="entry name" value="IGv"/>
    <property type="match status" value="1"/>
</dbReference>
<dbReference type="SUPFAM" id="SSF48726">
    <property type="entry name" value="Immunoglobulin"/>
    <property type="match status" value="1"/>
</dbReference>
<dbReference type="PROSITE" id="PS50835">
    <property type="entry name" value="IG_LIKE"/>
    <property type="match status" value="1"/>
</dbReference>
<keyword id="KW-1064">Adaptive immunity</keyword>
<keyword id="KW-0391">Immunity</keyword>
<keyword id="KW-1280">Immunoglobulin</keyword>
<keyword id="KW-0873">Pyrrolidone carboxylic acid</keyword>
<keyword id="KW-1185">Reference proteome</keyword>
<keyword id="KW-0732">Signal</keyword>
<proteinExistence type="inferred from homology"/>
<organism>
    <name type="scientific">Oryctolagus cuniculus</name>
    <name type="common">Rabbit</name>
    <dbReference type="NCBI Taxonomy" id="9986"/>
    <lineage>
        <taxon>Eukaryota</taxon>
        <taxon>Metazoa</taxon>
        <taxon>Chordata</taxon>
        <taxon>Craniata</taxon>
        <taxon>Vertebrata</taxon>
        <taxon>Euteleostomi</taxon>
        <taxon>Mammalia</taxon>
        <taxon>Eutheria</taxon>
        <taxon>Euarchontoglires</taxon>
        <taxon>Glires</taxon>
        <taxon>Lagomorpha</taxon>
        <taxon>Leporidae</taxon>
        <taxon>Oryctolagus</taxon>
    </lineage>
</organism>
<accession>P01829</accession>
<name>HV2C_RABIT</name>
<reference key="1">
    <citation type="journal article" date="1982" name="Nature">
        <title>A cDNA sequence encoding a rabbit heavy chain variable region of the VHa2 allotype showing homologies with human heavy chain sequences.</title>
        <authorList>
            <person name="Bernstein K.E."/>
            <person name="Reddy E.P."/>
            <person name="Alexander C.B."/>
            <person name="Mage R.G."/>
        </authorList>
    </citation>
    <scope>NUCLEOTIDE SEQUENCE</scope>
</reference>
<sequence>METGLRWLLLVAVLKGVQCQSVKESEGGLFKPMDTLTLTCTVSGFSLSSYGVNWVRQAPGKGLEWIGYIGTGTYLANWAKSRSTITSNTNENTVTLKMTSLTGADTATYFCGSGANIENEFFNAIWGPGTLVTVSS</sequence>
<feature type="signal peptide">
    <location>
        <begin position="1"/>
        <end position="19"/>
    </location>
</feature>
<feature type="chain" id="PRO_0000015250" description="Ig heavy chain V-A2 region P-MU-3">
    <location>
        <begin position="20"/>
        <end position="136"/>
    </location>
</feature>
<feature type="domain" description="Ig-like">
    <location>
        <begin position="20"/>
        <end position="127"/>
    </location>
</feature>
<feature type="modified residue" description="Pyrrolidone carboxylic acid" evidence="1">
    <location>
        <position position="20"/>
    </location>
</feature>
<feature type="non-terminal residue">
    <location>
        <position position="136"/>
    </location>
</feature>
<protein>
    <recommendedName>
        <fullName>Ig heavy chain V-A2 region P-MU-3</fullName>
    </recommendedName>
</protein>
<evidence type="ECO:0000250" key="1">
    <source>
        <dbReference type="UniProtKB" id="P01826"/>
    </source>
</evidence>